<organism>
    <name type="scientific">Escherichia coli (strain K12)</name>
    <dbReference type="NCBI Taxonomy" id="83333"/>
    <lineage>
        <taxon>Bacteria</taxon>
        <taxon>Pseudomonadati</taxon>
        <taxon>Pseudomonadota</taxon>
        <taxon>Gammaproteobacteria</taxon>
        <taxon>Enterobacterales</taxon>
        <taxon>Enterobacteriaceae</taxon>
        <taxon>Escherichia</taxon>
    </lineage>
</organism>
<proteinExistence type="inferred from homology"/>
<reference key="1">
    <citation type="journal article" date="1997" name="Science">
        <title>The complete genome sequence of Escherichia coli K-12.</title>
        <authorList>
            <person name="Blattner F.R."/>
            <person name="Plunkett G. III"/>
            <person name="Bloch C.A."/>
            <person name="Perna N.T."/>
            <person name="Burland V."/>
            <person name="Riley M."/>
            <person name="Collado-Vides J."/>
            <person name="Glasner J.D."/>
            <person name="Rode C.K."/>
            <person name="Mayhew G.F."/>
            <person name="Gregor J."/>
            <person name="Davis N.W."/>
            <person name="Kirkpatrick H.A."/>
            <person name="Goeden M.A."/>
            <person name="Rose D.J."/>
            <person name="Mau B."/>
            <person name="Shao Y."/>
        </authorList>
    </citation>
    <scope>NUCLEOTIDE SEQUENCE [LARGE SCALE GENOMIC DNA]</scope>
    <source>
        <strain>K12 / MG1655 / ATCC 47076</strain>
    </source>
</reference>
<reference key="2">
    <citation type="journal article" date="2006" name="Mol. Syst. Biol.">
        <title>Highly accurate genome sequences of Escherichia coli K-12 strains MG1655 and W3110.</title>
        <authorList>
            <person name="Hayashi K."/>
            <person name="Morooka N."/>
            <person name="Yamamoto Y."/>
            <person name="Fujita K."/>
            <person name="Isono K."/>
            <person name="Choi S."/>
            <person name="Ohtsubo E."/>
            <person name="Baba T."/>
            <person name="Wanner B.L."/>
            <person name="Mori H."/>
            <person name="Horiuchi T."/>
        </authorList>
    </citation>
    <scope>NUCLEOTIDE SEQUENCE [LARGE SCALE GENOMIC DNA]</scope>
    <source>
        <strain>K12 / W3110 / ATCC 27325 / DSM 5911</strain>
    </source>
</reference>
<sequence>MFTKALSVVLLTCALFSGQLMAGHKGHEFVWVKNVDHQLRHEADSDELRAVAEESAEGLREHFYWQKSRKPEAGQR</sequence>
<dbReference type="EMBL" id="U00096">
    <property type="protein sequence ID" value="AAC74518.1"/>
    <property type="molecule type" value="Genomic_DNA"/>
</dbReference>
<dbReference type="EMBL" id="AP009048">
    <property type="protein sequence ID" value="BAE76437.1"/>
    <property type="molecule type" value="Genomic_DNA"/>
</dbReference>
<dbReference type="PIR" id="G64895">
    <property type="entry name" value="G64895"/>
</dbReference>
<dbReference type="RefSeq" id="NP_415953.1">
    <property type="nucleotide sequence ID" value="NC_000913.3"/>
</dbReference>
<dbReference type="RefSeq" id="WP_000494244.1">
    <property type="nucleotide sequence ID" value="NZ_STEB01000043.1"/>
</dbReference>
<dbReference type="SMR" id="P64459"/>
<dbReference type="BioGRID" id="4260187">
    <property type="interactions" value="10"/>
</dbReference>
<dbReference type="FunCoup" id="P64459">
    <property type="interactions" value="25"/>
</dbReference>
<dbReference type="STRING" id="511145.b1436"/>
<dbReference type="PaxDb" id="511145-b1436"/>
<dbReference type="EnsemblBacteria" id="AAC74518">
    <property type="protein sequence ID" value="AAC74518"/>
    <property type="gene ID" value="b1436"/>
</dbReference>
<dbReference type="GeneID" id="945990"/>
<dbReference type="KEGG" id="ecj:JW1432"/>
<dbReference type="KEGG" id="eco:b1436"/>
<dbReference type="PATRIC" id="fig|511145.12.peg.1501"/>
<dbReference type="EchoBASE" id="EB4047"/>
<dbReference type="eggNOG" id="ENOG5032UUW">
    <property type="taxonomic scope" value="Bacteria"/>
</dbReference>
<dbReference type="HOGENOM" id="CLU_198921_0_0_6"/>
<dbReference type="InParanoid" id="P64459"/>
<dbReference type="OMA" id="EHHRWQD"/>
<dbReference type="OrthoDB" id="6560430at2"/>
<dbReference type="PhylomeDB" id="P64459"/>
<dbReference type="BioCyc" id="EcoCyc:G6747-MONOMER"/>
<dbReference type="PRO" id="PR:P64459"/>
<dbReference type="Proteomes" id="UP000000625">
    <property type="component" value="Chromosome"/>
</dbReference>
<dbReference type="InterPro" id="IPR020117">
    <property type="entry name" value="Uncharacterised_YncJ"/>
</dbReference>
<dbReference type="Pfam" id="PF10829">
    <property type="entry name" value="DUF2554"/>
    <property type="match status" value="1"/>
</dbReference>
<name>YNCJ_ECOLI</name>
<evidence type="ECO:0000255" key="1"/>
<feature type="signal peptide" evidence="1">
    <location>
        <begin position="1"/>
        <end position="22"/>
    </location>
</feature>
<feature type="chain" id="PRO_0000013842" description="Uncharacterized protein YncJ">
    <location>
        <begin position="23"/>
        <end position="76"/>
    </location>
</feature>
<gene>
    <name type="primary">yncJ</name>
    <name type="ordered locus">b1436</name>
    <name type="ordered locus">JW1432</name>
</gene>
<protein>
    <recommendedName>
        <fullName>Uncharacterized protein YncJ</fullName>
    </recommendedName>
</protein>
<accession>P64459</accession>
<accession>P76105</accession>
<accession>Q2MBB9</accession>
<keyword id="KW-1185">Reference proteome</keyword>
<keyword id="KW-0732">Signal</keyword>